<gene>
    <name type="primary">prt-1</name>
    <name type="ORF">NCU02208</name>
</gene>
<sequence length="747" mass="85566">MAPSFDHLRDEDLDEDDFDVDEVDISDIREKYEVQLEQGYDAFVVVDGLPEVNEEQKPKLVKFLLKKLNTVGKTREDLIFMPMGEDGKSLRFAFVEYSSPAEAAAACRQLDLVPLDKKHTLRVNKLTDVDRYGREGRIDDEYTPPKIEEFQEKEHLRSFMADPSGRGRDQFVMFRGESVGVFWNNEKDTPENIVDRQHWTETFVQWSPLGTYLTSVHAQGVQLWGGPSWTRQRRFAHPFVNLVAFSPNEKYLVTWSNRPISIPEEGHPALSVEDDGKNYVIWDIETSKPLRSFAQLDTPAAAEGEAPKKAPKFPWPAFKWSADDKYVARLNPGQSISVYELPRMNLLDKTAIKIEGVVDFDWAPATVQRDGVKSYEQLFCFWTPEIGSNPARVGLMSIPSKQVVRSLNLFSVSDAKLHWQSEGAYLCVKVDRHSKSKKSQATTLEIFRVKEKGVPVEVVDTIKDTVINFAWEPKGDRFVIITTTEPVGATAVPPKTSVAFFCPEKAKGNAVGNFKHLRTLEKKNSNAIYWSPKGRFVVVATVANTQSSDLDFYDLDFEGEKPESDKDLTANLQLMNTADHYGVTDVEWDPSGRFVATWASAWKHSMENGYHLYDFKGEQLREEAIEKFKQFQWRPRPATLLSKEEQKAIRRNLREYSRIFEQEDAERISSADVAVVEARRRLLEEWFAWREAIRQEVAEEREIYGLPADPVADLIKAKTPELATDQEEQVIEEIMEEVLEETEEIVQ</sequence>
<evidence type="ECO:0000255" key="1">
    <source>
        <dbReference type="HAMAP-Rule" id="MF_03001"/>
    </source>
</evidence>
<comment type="function">
    <text evidence="1">RNA-binding component of the eukaryotic translation initiation factor 3 (eIF-3) complex, which is involved in protein synthesis of a specialized repertoire of mRNAs and, together with other initiation factors, stimulates binding of mRNA and methionyl-tRNAi to the 40S ribosome. The eIF-3 complex specifically targets and initiates translation of a subset of mRNAs involved in cell proliferation.</text>
</comment>
<comment type="subunit">
    <text evidence="1">Component of the eukaryotic translation initiation factor 3 (eIF-3) complex.</text>
</comment>
<comment type="subcellular location">
    <subcellularLocation>
        <location evidence="1">Cytoplasm</location>
    </subcellularLocation>
</comment>
<comment type="similarity">
    <text evidence="1">Belongs to the eIF-3 subunit B family.</text>
</comment>
<accession>Q7S464</accession>
<dbReference type="EMBL" id="CM002242">
    <property type="protein sequence ID" value="EAA30291.1"/>
    <property type="molecule type" value="Genomic_DNA"/>
</dbReference>
<dbReference type="SMR" id="Q7S464"/>
<dbReference type="FunCoup" id="Q7S464">
    <property type="interactions" value="1303"/>
</dbReference>
<dbReference type="STRING" id="367110.Q7S464"/>
<dbReference type="PaxDb" id="5141-EFNCRP00000003266"/>
<dbReference type="EnsemblFungi" id="EAA30291">
    <property type="protein sequence ID" value="EAA30291"/>
    <property type="gene ID" value="NCU02208"/>
</dbReference>
<dbReference type="KEGG" id="ncr:NCU02208"/>
<dbReference type="VEuPathDB" id="FungiDB:NCU02208"/>
<dbReference type="HOGENOM" id="CLU_011152_4_0_1"/>
<dbReference type="InParanoid" id="Q7S464"/>
<dbReference type="OMA" id="LWGGPQF"/>
<dbReference type="OrthoDB" id="10250414at2759"/>
<dbReference type="Proteomes" id="UP000001805">
    <property type="component" value="Chromosome 7, Linkage Group VII"/>
</dbReference>
<dbReference type="GO" id="GO:0010494">
    <property type="term" value="C:cytoplasmic stress granule"/>
    <property type="evidence" value="ECO:0007669"/>
    <property type="project" value="EnsemblFungi"/>
</dbReference>
<dbReference type="GO" id="GO:0016282">
    <property type="term" value="C:eukaryotic 43S preinitiation complex"/>
    <property type="evidence" value="ECO:0007669"/>
    <property type="project" value="UniProtKB-UniRule"/>
</dbReference>
<dbReference type="GO" id="GO:0033290">
    <property type="term" value="C:eukaryotic 48S preinitiation complex"/>
    <property type="evidence" value="ECO:0007669"/>
    <property type="project" value="UniProtKB-UniRule"/>
</dbReference>
<dbReference type="GO" id="GO:0005852">
    <property type="term" value="C:eukaryotic translation initiation factor 3 complex"/>
    <property type="evidence" value="ECO:0000318"/>
    <property type="project" value="GO_Central"/>
</dbReference>
<dbReference type="GO" id="GO:0071540">
    <property type="term" value="C:eukaryotic translation initiation factor 3 complex, eIF3e"/>
    <property type="evidence" value="ECO:0007669"/>
    <property type="project" value="EnsemblFungi"/>
</dbReference>
<dbReference type="GO" id="GO:0071541">
    <property type="term" value="C:eukaryotic translation initiation factor 3 complex, eIF3m"/>
    <property type="evidence" value="ECO:0007669"/>
    <property type="project" value="EnsemblFungi"/>
</dbReference>
<dbReference type="GO" id="GO:0043614">
    <property type="term" value="C:multi-eIF complex"/>
    <property type="evidence" value="ECO:0007669"/>
    <property type="project" value="EnsemblFungi"/>
</dbReference>
<dbReference type="GO" id="GO:0042802">
    <property type="term" value="F:identical protein binding"/>
    <property type="evidence" value="ECO:0007669"/>
    <property type="project" value="EnsemblFungi"/>
</dbReference>
<dbReference type="GO" id="GO:0003723">
    <property type="term" value="F:RNA binding"/>
    <property type="evidence" value="ECO:0007669"/>
    <property type="project" value="UniProtKB-UniRule"/>
</dbReference>
<dbReference type="GO" id="GO:0003743">
    <property type="term" value="F:translation initiation factor activity"/>
    <property type="evidence" value="ECO:0007669"/>
    <property type="project" value="UniProtKB-UniRule"/>
</dbReference>
<dbReference type="GO" id="GO:0031369">
    <property type="term" value="F:translation initiation factor binding"/>
    <property type="evidence" value="ECO:0007669"/>
    <property type="project" value="InterPro"/>
</dbReference>
<dbReference type="GO" id="GO:0001732">
    <property type="term" value="P:formation of cytoplasmic translation initiation complex"/>
    <property type="evidence" value="ECO:0007669"/>
    <property type="project" value="UniProtKB-UniRule"/>
</dbReference>
<dbReference type="GO" id="GO:0006413">
    <property type="term" value="P:translational initiation"/>
    <property type="evidence" value="ECO:0000318"/>
    <property type="project" value="GO_Central"/>
</dbReference>
<dbReference type="CDD" id="cd12278">
    <property type="entry name" value="RRM_eIF3B"/>
    <property type="match status" value="1"/>
</dbReference>
<dbReference type="FunFam" id="2.130.10.10:FF:000419">
    <property type="entry name" value="Eukaryotic translation initiation factor 3 subunit B"/>
    <property type="match status" value="1"/>
</dbReference>
<dbReference type="FunFam" id="3.30.70.330:FF:000235">
    <property type="entry name" value="Eukaryotic translation initiation factor 3 subunit B"/>
    <property type="match status" value="1"/>
</dbReference>
<dbReference type="Gene3D" id="3.30.70.330">
    <property type="match status" value="1"/>
</dbReference>
<dbReference type="Gene3D" id="2.130.10.10">
    <property type="entry name" value="YVTN repeat-like/Quinoprotein amine dehydrogenase"/>
    <property type="match status" value="2"/>
</dbReference>
<dbReference type="HAMAP" id="MF_03001">
    <property type="entry name" value="eIF3b"/>
    <property type="match status" value="1"/>
</dbReference>
<dbReference type="InterPro" id="IPR011400">
    <property type="entry name" value="EIF3B"/>
</dbReference>
<dbReference type="InterPro" id="IPR034363">
    <property type="entry name" value="eIF3B_RRM"/>
</dbReference>
<dbReference type="InterPro" id="IPR012677">
    <property type="entry name" value="Nucleotide-bd_a/b_plait_sf"/>
</dbReference>
<dbReference type="InterPro" id="IPR035979">
    <property type="entry name" value="RBD_domain_sf"/>
</dbReference>
<dbReference type="InterPro" id="IPR000504">
    <property type="entry name" value="RRM_dom"/>
</dbReference>
<dbReference type="InterPro" id="IPR013979">
    <property type="entry name" value="TIF_beta_prop-like"/>
</dbReference>
<dbReference type="InterPro" id="IPR015943">
    <property type="entry name" value="WD40/YVTN_repeat-like_dom_sf"/>
</dbReference>
<dbReference type="PANTHER" id="PTHR14068">
    <property type="entry name" value="EUKARYOTIC TRANSLATION INITIATION FACTOR 3 EIF3 -RELATED"/>
    <property type="match status" value="1"/>
</dbReference>
<dbReference type="PANTHER" id="PTHR14068:SF0">
    <property type="entry name" value="EUKARYOTIC TRANSLATION INITIATION FACTOR 3 SUBUNIT B"/>
    <property type="match status" value="1"/>
</dbReference>
<dbReference type="Pfam" id="PF08662">
    <property type="entry name" value="eIF2A"/>
    <property type="match status" value="1"/>
</dbReference>
<dbReference type="PIRSF" id="PIRSF036424">
    <property type="entry name" value="eIF3b"/>
    <property type="match status" value="1"/>
</dbReference>
<dbReference type="SUPFAM" id="SSF82171">
    <property type="entry name" value="DPP6 N-terminal domain-like"/>
    <property type="match status" value="1"/>
</dbReference>
<dbReference type="SUPFAM" id="SSF54928">
    <property type="entry name" value="RNA-binding domain, RBD"/>
    <property type="match status" value="1"/>
</dbReference>
<dbReference type="PROSITE" id="PS50102">
    <property type="entry name" value="RRM"/>
    <property type="match status" value="1"/>
</dbReference>
<keyword id="KW-0963">Cytoplasm</keyword>
<keyword id="KW-0396">Initiation factor</keyword>
<keyword id="KW-0648">Protein biosynthesis</keyword>
<keyword id="KW-1185">Reference proteome</keyword>
<keyword id="KW-0677">Repeat</keyword>
<keyword id="KW-0694">RNA-binding</keyword>
<keyword id="KW-0853">WD repeat</keyword>
<proteinExistence type="inferred from homology"/>
<organism>
    <name type="scientific">Neurospora crassa (strain ATCC 24698 / 74-OR23-1A / CBS 708.71 / DSM 1257 / FGSC 987)</name>
    <dbReference type="NCBI Taxonomy" id="367110"/>
    <lineage>
        <taxon>Eukaryota</taxon>
        <taxon>Fungi</taxon>
        <taxon>Dikarya</taxon>
        <taxon>Ascomycota</taxon>
        <taxon>Pezizomycotina</taxon>
        <taxon>Sordariomycetes</taxon>
        <taxon>Sordariomycetidae</taxon>
        <taxon>Sordariales</taxon>
        <taxon>Sordariaceae</taxon>
        <taxon>Neurospora</taxon>
    </lineage>
</organism>
<name>EIF3B_NEUCR</name>
<reference key="1">
    <citation type="journal article" date="2003" name="Nature">
        <title>The genome sequence of the filamentous fungus Neurospora crassa.</title>
        <authorList>
            <person name="Galagan J.E."/>
            <person name="Calvo S.E."/>
            <person name="Borkovich K.A."/>
            <person name="Selker E.U."/>
            <person name="Read N.D."/>
            <person name="Jaffe D.B."/>
            <person name="FitzHugh W."/>
            <person name="Ma L.-J."/>
            <person name="Smirnov S."/>
            <person name="Purcell S."/>
            <person name="Rehman B."/>
            <person name="Elkins T."/>
            <person name="Engels R."/>
            <person name="Wang S."/>
            <person name="Nielsen C.B."/>
            <person name="Butler J."/>
            <person name="Endrizzi M."/>
            <person name="Qui D."/>
            <person name="Ianakiev P."/>
            <person name="Bell-Pedersen D."/>
            <person name="Nelson M.A."/>
            <person name="Werner-Washburne M."/>
            <person name="Selitrennikoff C.P."/>
            <person name="Kinsey J.A."/>
            <person name="Braun E.L."/>
            <person name="Zelter A."/>
            <person name="Schulte U."/>
            <person name="Kothe G.O."/>
            <person name="Jedd G."/>
            <person name="Mewes H.-W."/>
            <person name="Staben C."/>
            <person name="Marcotte E."/>
            <person name="Greenberg D."/>
            <person name="Roy A."/>
            <person name="Foley K."/>
            <person name="Naylor J."/>
            <person name="Stange-Thomann N."/>
            <person name="Barrett R."/>
            <person name="Gnerre S."/>
            <person name="Kamal M."/>
            <person name="Kamvysselis M."/>
            <person name="Mauceli E.W."/>
            <person name="Bielke C."/>
            <person name="Rudd S."/>
            <person name="Frishman D."/>
            <person name="Krystofova S."/>
            <person name="Rasmussen C."/>
            <person name="Metzenberg R.L."/>
            <person name="Perkins D.D."/>
            <person name="Kroken S."/>
            <person name="Cogoni C."/>
            <person name="Macino G."/>
            <person name="Catcheside D.E.A."/>
            <person name="Li W."/>
            <person name="Pratt R.J."/>
            <person name="Osmani S.A."/>
            <person name="DeSouza C.P.C."/>
            <person name="Glass N.L."/>
            <person name="Orbach M.J."/>
            <person name="Berglund J.A."/>
            <person name="Voelker R."/>
            <person name="Yarden O."/>
            <person name="Plamann M."/>
            <person name="Seiler S."/>
            <person name="Dunlap J.C."/>
            <person name="Radford A."/>
            <person name="Aramayo R."/>
            <person name="Natvig D.O."/>
            <person name="Alex L.A."/>
            <person name="Mannhaupt G."/>
            <person name="Ebbole D.J."/>
            <person name="Freitag M."/>
            <person name="Paulsen I."/>
            <person name="Sachs M.S."/>
            <person name="Lander E.S."/>
            <person name="Nusbaum C."/>
            <person name="Birren B.W."/>
        </authorList>
    </citation>
    <scope>NUCLEOTIDE SEQUENCE [LARGE SCALE GENOMIC DNA]</scope>
    <source>
        <strain>ATCC 24698 / 74-OR23-1A / CBS 708.71 / DSM 1257 / FGSC 987</strain>
    </source>
</reference>
<protein>
    <recommendedName>
        <fullName evidence="1">Eukaryotic translation initiation factor 3 subunit B</fullName>
        <shortName evidence="1">eIF3b</shortName>
    </recommendedName>
    <alternativeName>
        <fullName evidence="1">Eukaryotic translation initiation factor 3 90 kDa subunit homolog</fullName>
        <shortName evidence="1">eIF3 p90</shortName>
    </alternativeName>
    <alternativeName>
        <fullName>Translation initiation factor eIF3 p90 subunit homolog</fullName>
    </alternativeName>
</protein>
<feature type="chain" id="PRO_0000363823" description="Eukaryotic translation initiation factor 3 subunit B">
    <location>
        <begin position="1"/>
        <end position="747"/>
    </location>
</feature>
<feature type="domain" description="RRM" evidence="1">
    <location>
        <begin position="42"/>
        <end position="128"/>
    </location>
</feature>
<feature type="repeat" description="WD 1">
    <location>
        <begin position="195"/>
        <end position="234"/>
    </location>
</feature>
<feature type="repeat" description="WD 2">
    <location>
        <begin position="236"/>
        <end position="292"/>
    </location>
</feature>
<feature type="repeat" description="WD 3">
    <location>
        <begin position="310"/>
        <end position="349"/>
    </location>
</feature>
<feature type="repeat" description="WD 4">
    <location>
        <begin position="520"/>
        <end position="563"/>
    </location>
</feature>
<feature type="repeat" description="WD 5">
    <location>
        <begin position="578"/>
        <end position="623"/>
    </location>
</feature>